<keyword id="KW-0963">Cytoplasm</keyword>
<keyword id="KW-0235">DNA replication</keyword>
<keyword id="KW-0236">DNA replication inhibitor</keyword>
<keyword id="KW-0479">Metal-binding</keyword>
<keyword id="KW-1185">Reference proteome</keyword>
<keyword id="KW-0862">Zinc</keyword>
<dbReference type="EMBL" id="AL935263">
    <property type="protein sequence ID" value="CCC78180.1"/>
    <property type="molecule type" value="Genomic_DNA"/>
</dbReference>
<dbReference type="RefSeq" id="WP_003640967.1">
    <property type="nucleotide sequence ID" value="NC_004567.2"/>
</dbReference>
<dbReference type="RefSeq" id="YP_004888694.1">
    <property type="nucleotide sequence ID" value="NC_004567.2"/>
</dbReference>
<dbReference type="SMR" id="Q88YP3"/>
<dbReference type="STRING" id="220668.lp_0706"/>
<dbReference type="DNASU" id="1062799"/>
<dbReference type="EnsemblBacteria" id="CCC78180">
    <property type="protein sequence ID" value="CCC78180"/>
    <property type="gene ID" value="lp_0706"/>
</dbReference>
<dbReference type="KEGG" id="lpl:lp_0706"/>
<dbReference type="PATRIC" id="fig|220668.9.peg.593"/>
<dbReference type="eggNOG" id="COG4467">
    <property type="taxonomic scope" value="Bacteria"/>
</dbReference>
<dbReference type="HOGENOM" id="CLU_157169_0_0_9"/>
<dbReference type="OrthoDB" id="2112130at2"/>
<dbReference type="PhylomeDB" id="Q88YP3"/>
<dbReference type="Proteomes" id="UP000000432">
    <property type="component" value="Chromosome"/>
</dbReference>
<dbReference type="GO" id="GO:0009295">
    <property type="term" value="C:nucleoid"/>
    <property type="evidence" value="ECO:0007669"/>
    <property type="project" value="UniProtKB-SubCell"/>
</dbReference>
<dbReference type="GO" id="GO:0006260">
    <property type="term" value="P:DNA replication"/>
    <property type="evidence" value="ECO:0007669"/>
    <property type="project" value="UniProtKB-UniRule"/>
</dbReference>
<dbReference type="HAMAP" id="MF_01159">
    <property type="entry name" value="YabA"/>
    <property type="match status" value="1"/>
</dbReference>
<dbReference type="InterPro" id="IPR010377">
    <property type="entry name" value="YabA"/>
</dbReference>
<dbReference type="Pfam" id="PF06156">
    <property type="entry name" value="YabA"/>
    <property type="match status" value="1"/>
</dbReference>
<dbReference type="PIRSF" id="PIRSF021439">
    <property type="entry name" value="DUF972"/>
    <property type="match status" value="1"/>
</dbReference>
<accession>Q88YP3</accession>
<accession>F9ULU1</accession>
<proteinExistence type="inferred from homology"/>
<protein>
    <recommendedName>
        <fullName evidence="1">Replication initiation control protein YabA</fullName>
    </recommendedName>
</protein>
<gene>
    <name evidence="1" type="primary">yabA</name>
    <name type="ordered locus">lp_0706</name>
</gene>
<feature type="chain" id="PRO_0000211910" description="Replication initiation control protein YabA">
    <location>
        <begin position="1"/>
        <end position="115"/>
    </location>
</feature>
<feature type="binding site" evidence="1">
    <location>
        <position position="85"/>
    </location>
    <ligand>
        <name>Zn(2+)</name>
        <dbReference type="ChEBI" id="CHEBI:29105"/>
    </ligand>
</feature>
<feature type="binding site" evidence="1">
    <location>
        <position position="87"/>
    </location>
    <ligand>
        <name>Zn(2+)</name>
        <dbReference type="ChEBI" id="CHEBI:29105"/>
    </ligand>
</feature>
<feature type="binding site" evidence="1">
    <location>
        <position position="101"/>
    </location>
    <ligand>
        <name>Zn(2+)</name>
        <dbReference type="ChEBI" id="CHEBI:29105"/>
    </ligand>
</feature>
<feature type="binding site" evidence="1">
    <location>
        <position position="104"/>
    </location>
    <ligand>
        <name>Zn(2+)</name>
        <dbReference type="ChEBI" id="CHEBI:29105"/>
    </ligand>
</feature>
<evidence type="ECO:0000255" key="1">
    <source>
        <dbReference type="HAMAP-Rule" id="MF_01159"/>
    </source>
</evidence>
<organism>
    <name type="scientific">Lactiplantibacillus plantarum (strain ATCC BAA-793 / NCIMB 8826 / WCFS1)</name>
    <name type="common">Lactobacillus plantarum</name>
    <dbReference type="NCBI Taxonomy" id="220668"/>
    <lineage>
        <taxon>Bacteria</taxon>
        <taxon>Bacillati</taxon>
        <taxon>Bacillota</taxon>
        <taxon>Bacilli</taxon>
        <taxon>Lactobacillales</taxon>
        <taxon>Lactobacillaceae</taxon>
        <taxon>Lactiplantibacillus</taxon>
    </lineage>
</organism>
<comment type="function">
    <text evidence="1">Involved in control of chromosome replication initiation. Inhibits the cooperative binding of DnaA to the oriC region, thus negatively regulating initiation of chromosome replication. Inhibits the ability of DnaA-ATP to form a helix on DNA; does not disassemble preformed DnaA-DNA helices. Decreases the residence time of DnaA on the chromosome at its binding sites (oriC, replication forks and promoter-binding sites). Tethers DnaA to the replication machinery via the DNA polymerase beta sliding clamp subunit (dnaN). Associates with oriC and other DnaA targets on the chromosome in a DnaA-dependent manner.</text>
</comment>
<comment type="cofactor">
    <cofactor evidence="1">
        <name>Zn(2+)</name>
        <dbReference type="ChEBI" id="CHEBI:29105"/>
    </cofactor>
    <text evidence="1">Binds 1 zinc ion per subunit.</text>
</comment>
<comment type="subunit">
    <text evidence="1">Homotetramer. Interacts with both DnaA and DnaN, acting as a bridge between these two proteins.</text>
</comment>
<comment type="subcellular location">
    <subcellularLocation>
        <location evidence="1">Cytoplasm</location>
        <location evidence="1">Nucleoid</location>
    </subcellularLocation>
    <text evidence="1">Localizes in tight foci, which correspond to the replisome at mid-cell throughout the cell cycle.</text>
</comment>
<comment type="similarity">
    <text evidence="1">Belongs to the YabA family.</text>
</comment>
<reference key="1">
    <citation type="journal article" date="2003" name="Proc. Natl. Acad. Sci. U.S.A.">
        <title>Complete genome sequence of Lactobacillus plantarum WCFS1.</title>
        <authorList>
            <person name="Kleerebezem M."/>
            <person name="Boekhorst J."/>
            <person name="van Kranenburg R."/>
            <person name="Molenaar D."/>
            <person name="Kuipers O.P."/>
            <person name="Leer R."/>
            <person name="Tarchini R."/>
            <person name="Peters S.A."/>
            <person name="Sandbrink H.M."/>
            <person name="Fiers M.W.E.J."/>
            <person name="Stiekema W."/>
            <person name="Klein Lankhorst R.M."/>
            <person name="Bron P.A."/>
            <person name="Hoffer S.M."/>
            <person name="Nierop Groot M.N."/>
            <person name="Kerkhoven R."/>
            <person name="De Vries M."/>
            <person name="Ursing B."/>
            <person name="De Vos W.M."/>
            <person name="Siezen R.J."/>
        </authorList>
    </citation>
    <scope>NUCLEOTIDE SEQUENCE [LARGE SCALE GENOMIC DNA]</scope>
    <source>
        <strain>ATCC BAA-793 / NCIMB 8826 / WCFS1</strain>
    </source>
</reference>
<reference key="2">
    <citation type="journal article" date="2012" name="J. Bacteriol.">
        <title>Complete resequencing and reannotation of the Lactobacillus plantarum WCFS1 genome.</title>
        <authorList>
            <person name="Siezen R.J."/>
            <person name="Francke C."/>
            <person name="Renckens B."/>
            <person name="Boekhorst J."/>
            <person name="Wels M."/>
            <person name="Kleerebezem M."/>
            <person name="van Hijum S.A."/>
        </authorList>
    </citation>
    <scope>NUCLEOTIDE SEQUENCE [LARGE SCALE GENOMIC DNA]</scope>
    <scope>GENOME REANNOTATION</scope>
    <source>
        <strain>ATCC BAA-793 / NCIMB 8826 / WCFS1</strain>
    </source>
</reference>
<name>YABA_LACPL</name>
<sequence length="115" mass="13614">MDKRDLYDSFGEMEQQMQQMLDKMAKLRADMTTVLEKNAELVIENEHLREHMVEIENELPKKAASTTTLSKSRQNLEKLYDEGFHVCNQFYGKRRDDDESCVFCLEVIYGERERA</sequence>